<dbReference type="EMBL" id="EU262889">
    <property type="protein sequence ID" value="ABW98908.1"/>
    <property type="molecule type" value="Genomic_DNA"/>
</dbReference>
<dbReference type="RefSeq" id="YP_001687403.1">
    <property type="nucleotide sequence ID" value="NC_010361.1"/>
</dbReference>
<dbReference type="SMR" id="B0Z4Z6"/>
<dbReference type="GeneID" id="5951969"/>
<dbReference type="GO" id="GO:0009507">
    <property type="term" value="C:chloroplast"/>
    <property type="evidence" value="ECO:0007669"/>
    <property type="project" value="UniProtKB-SubCell"/>
</dbReference>
<dbReference type="GO" id="GO:0022625">
    <property type="term" value="C:cytosolic large ribosomal subunit"/>
    <property type="evidence" value="ECO:0007669"/>
    <property type="project" value="TreeGrafter"/>
</dbReference>
<dbReference type="GO" id="GO:0070180">
    <property type="term" value="F:large ribosomal subunit rRNA binding"/>
    <property type="evidence" value="ECO:0007669"/>
    <property type="project" value="TreeGrafter"/>
</dbReference>
<dbReference type="GO" id="GO:0003735">
    <property type="term" value="F:structural constituent of ribosome"/>
    <property type="evidence" value="ECO:0007669"/>
    <property type="project" value="InterPro"/>
</dbReference>
<dbReference type="GO" id="GO:0006412">
    <property type="term" value="P:translation"/>
    <property type="evidence" value="ECO:0007669"/>
    <property type="project" value="UniProtKB-UniRule"/>
</dbReference>
<dbReference type="CDD" id="cd00337">
    <property type="entry name" value="Ribosomal_uL14"/>
    <property type="match status" value="1"/>
</dbReference>
<dbReference type="FunFam" id="2.40.150.20:FF:000002">
    <property type="entry name" value="50S ribosomal protein L14, chloroplastic"/>
    <property type="match status" value="1"/>
</dbReference>
<dbReference type="Gene3D" id="2.40.150.20">
    <property type="entry name" value="Ribosomal protein L14"/>
    <property type="match status" value="1"/>
</dbReference>
<dbReference type="HAMAP" id="MF_01367">
    <property type="entry name" value="Ribosomal_uL14"/>
    <property type="match status" value="1"/>
</dbReference>
<dbReference type="InterPro" id="IPR000218">
    <property type="entry name" value="Ribosomal_uL14"/>
</dbReference>
<dbReference type="InterPro" id="IPR005745">
    <property type="entry name" value="Ribosomal_uL14_bac-type"/>
</dbReference>
<dbReference type="InterPro" id="IPR019972">
    <property type="entry name" value="Ribosomal_uL14_CS"/>
</dbReference>
<dbReference type="InterPro" id="IPR036853">
    <property type="entry name" value="Ribosomal_uL14_sf"/>
</dbReference>
<dbReference type="NCBIfam" id="TIGR01067">
    <property type="entry name" value="rplN_bact"/>
    <property type="match status" value="1"/>
</dbReference>
<dbReference type="PANTHER" id="PTHR11761">
    <property type="entry name" value="50S/60S RIBOSOMAL PROTEIN L14/L23"/>
    <property type="match status" value="1"/>
</dbReference>
<dbReference type="PANTHER" id="PTHR11761:SF3">
    <property type="entry name" value="LARGE RIBOSOMAL SUBUNIT PROTEIN UL14M"/>
    <property type="match status" value="1"/>
</dbReference>
<dbReference type="Pfam" id="PF00238">
    <property type="entry name" value="Ribosomal_L14"/>
    <property type="match status" value="1"/>
</dbReference>
<dbReference type="SMART" id="SM01374">
    <property type="entry name" value="Ribosomal_L14"/>
    <property type="match status" value="1"/>
</dbReference>
<dbReference type="SUPFAM" id="SSF50193">
    <property type="entry name" value="Ribosomal protein L14"/>
    <property type="match status" value="1"/>
</dbReference>
<dbReference type="PROSITE" id="PS00049">
    <property type="entry name" value="RIBOSOMAL_L14"/>
    <property type="match status" value="1"/>
</dbReference>
<sequence length="122" mass="13428">MIQPQTRLNVADNSGARELMCIRIIGASNRRYAHIGDIIVAVIKEALPSTSLERSEVVRAVIVRTCKELKCDDGIIIRYDDNAAVVIDQEGNPKGTRVFGAIAHELRELSFTKIVSLAPEVL</sequence>
<organism>
    <name type="scientific">Oenothera biennis</name>
    <name type="common">German evening primrose</name>
    <name type="synonym">Onagra biennis</name>
    <dbReference type="NCBI Taxonomy" id="3942"/>
    <lineage>
        <taxon>Eukaryota</taxon>
        <taxon>Viridiplantae</taxon>
        <taxon>Streptophyta</taxon>
        <taxon>Embryophyta</taxon>
        <taxon>Tracheophyta</taxon>
        <taxon>Spermatophyta</taxon>
        <taxon>Magnoliopsida</taxon>
        <taxon>eudicotyledons</taxon>
        <taxon>Gunneridae</taxon>
        <taxon>Pentapetalae</taxon>
        <taxon>rosids</taxon>
        <taxon>malvids</taxon>
        <taxon>Myrtales</taxon>
        <taxon>Onagraceae</taxon>
        <taxon>Onagroideae</taxon>
        <taxon>Onagreae</taxon>
        <taxon>Oenothera</taxon>
    </lineage>
</organism>
<proteinExistence type="inferred from homology"/>
<name>RK14_OENBI</name>
<comment type="function">
    <text evidence="1">Binds to 23S rRNA.</text>
</comment>
<comment type="subunit">
    <text evidence="1">Part of the 50S ribosomal subunit.</text>
</comment>
<comment type="subcellular location">
    <subcellularLocation>
        <location>Plastid</location>
        <location>Chloroplast</location>
    </subcellularLocation>
</comment>
<comment type="similarity">
    <text evidence="1">Belongs to the universal ribosomal protein uL14 family.</text>
</comment>
<protein>
    <recommendedName>
        <fullName evidence="1">Large ribosomal subunit protein uL14c</fullName>
    </recommendedName>
    <alternativeName>
        <fullName evidence="2">50S ribosomal protein L14, chloroplastic</fullName>
    </alternativeName>
</protein>
<evidence type="ECO:0000255" key="1">
    <source>
        <dbReference type="HAMAP-Rule" id="MF_01367"/>
    </source>
</evidence>
<evidence type="ECO:0000305" key="2"/>
<geneLocation type="chloroplast"/>
<feature type="chain" id="PRO_0000355895" description="Large ribosomal subunit protein uL14c">
    <location>
        <begin position="1"/>
        <end position="122"/>
    </location>
</feature>
<accession>B0Z4Z6</accession>
<keyword id="KW-0150">Chloroplast</keyword>
<keyword id="KW-0934">Plastid</keyword>
<keyword id="KW-0687">Ribonucleoprotein</keyword>
<keyword id="KW-0689">Ribosomal protein</keyword>
<keyword id="KW-0694">RNA-binding</keyword>
<keyword id="KW-0699">rRNA-binding</keyword>
<reference key="1">
    <citation type="journal article" date="2008" name="Nucleic Acids Res.">
        <title>The complete nucleotide sequences of the five genetically distinct plastid genomes of Oenothera, subsection Oenothera: I. Sequence evaluation and plastome evolution.</title>
        <authorList>
            <person name="Greiner S."/>
            <person name="Wang X."/>
            <person name="Rauwolf U."/>
            <person name="Silber M.V."/>
            <person name="Mayer K."/>
            <person name="Meurer J."/>
            <person name="Haberer G."/>
            <person name="Herrmann R.G."/>
        </authorList>
    </citation>
    <scope>NUCLEOTIDE SEQUENCE [LARGE SCALE GENOMIC DNA]</scope>
    <source>
        <strain>cv. Suaveolens Grado</strain>
    </source>
</reference>
<gene>
    <name evidence="1" type="primary">rpl14</name>
</gene>